<reference key="1">
    <citation type="journal article" date="2003" name="Nature">
        <title>The genome sequence of Bacillus anthracis Ames and comparison to closely related bacteria.</title>
        <authorList>
            <person name="Read T.D."/>
            <person name="Peterson S.N."/>
            <person name="Tourasse N.J."/>
            <person name="Baillie L.W."/>
            <person name="Paulsen I.T."/>
            <person name="Nelson K.E."/>
            <person name="Tettelin H."/>
            <person name="Fouts D.E."/>
            <person name="Eisen J.A."/>
            <person name="Gill S.R."/>
            <person name="Holtzapple E.K."/>
            <person name="Okstad O.A."/>
            <person name="Helgason E."/>
            <person name="Rilstone J."/>
            <person name="Wu M."/>
            <person name="Kolonay J.F."/>
            <person name="Beanan M.J."/>
            <person name="Dodson R.J."/>
            <person name="Brinkac L.M."/>
            <person name="Gwinn M.L."/>
            <person name="DeBoy R.T."/>
            <person name="Madpu R."/>
            <person name="Daugherty S.C."/>
            <person name="Durkin A.S."/>
            <person name="Haft D.H."/>
            <person name="Nelson W.C."/>
            <person name="Peterson J.D."/>
            <person name="Pop M."/>
            <person name="Khouri H.M."/>
            <person name="Radune D."/>
            <person name="Benton J.L."/>
            <person name="Mahamoud Y."/>
            <person name="Jiang L."/>
            <person name="Hance I.R."/>
            <person name="Weidman J.F."/>
            <person name="Berry K.J."/>
            <person name="Plaut R.D."/>
            <person name="Wolf A.M."/>
            <person name="Watkins K.L."/>
            <person name="Nierman W.C."/>
            <person name="Hazen A."/>
            <person name="Cline R.T."/>
            <person name="Redmond C."/>
            <person name="Thwaite J.E."/>
            <person name="White O."/>
            <person name="Salzberg S.L."/>
            <person name="Thomason B."/>
            <person name="Friedlander A.M."/>
            <person name="Koehler T.M."/>
            <person name="Hanna P.C."/>
            <person name="Kolstoe A.-B."/>
            <person name="Fraser C.M."/>
        </authorList>
    </citation>
    <scope>NUCLEOTIDE SEQUENCE [LARGE SCALE GENOMIC DNA]</scope>
    <source>
        <strain>Ames / isolate Porton</strain>
    </source>
</reference>
<reference key="2">
    <citation type="journal article" date="2009" name="J. Bacteriol.">
        <title>The complete genome sequence of Bacillus anthracis Ames 'Ancestor'.</title>
        <authorList>
            <person name="Ravel J."/>
            <person name="Jiang L."/>
            <person name="Stanley S.T."/>
            <person name="Wilson M.R."/>
            <person name="Decker R.S."/>
            <person name="Read T.D."/>
            <person name="Worsham P."/>
            <person name="Keim P.S."/>
            <person name="Salzberg S.L."/>
            <person name="Fraser-Liggett C.M."/>
            <person name="Rasko D.A."/>
        </authorList>
    </citation>
    <scope>NUCLEOTIDE SEQUENCE [LARGE SCALE GENOMIC DNA]</scope>
    <source>
        <strain>Ames ancestor</strain>
    </source>
</reference>
<reference key="3">
    <citation type="submission" date="2004-01" db="EMBL/GenBank/DDBJ databases">
        <title>Complete genome sequence of Bacillus anthracis Sterne.</title>
        <authorList>
            <person name="Brettin T.S."/>
            <person name="Bruce D."/>
            <person name="Challacombe J.F."/>
            <person name="Gilna P."/>
            <person name="Han C."/>
            <person name="Hill K."/>
            <person name="Hitchcock P."/>
            <person name="Jackson P."/>
            <person name="Keim P."/>
            <person name="Longmire J."/>
            <person name="Lucas S."/>
            <person name="Okinaka R."/>
            <person name="Richardson P."/>
            <person name="Rubin E."/>
            <person name="Tice H."/>
        </authorList>
    </citation>
    <scope>NUCLEOTIDE SEQUENCE [LARGE SCALE GENOMIC DNA]</scope>
    <source>
        <strain>Sterne</strain>
    </source>
</reference>
<gene>
    <name evidence="1" type="primary">rplC</name>
    <name type="ordered locus">BA_0110</name>
    <name type="ordered locus">GBAA_0110</name>
    <name type="ordered locus">BAS0110</name>
</gene>
<name>RL3_BACAN</name>
<dbReference type="EMBL" id="AE016879">
    <property type="protein sequence ID" value="AAP24164.1"/>
    <property type="molecule type" value="Genomic_DNA"/>
</dbReference>
<dbReference type="EMBL" id="AE017334">
    <property type="protein sequence ID" value="AAT29190.1"/>
    <property type="molecule type" value="Genomic_DNA"/>
</dbReference>
<dbReference type="EMBL" id="AE017225">
    <property type="protein sequence ID" value="AAT52447.1"/>
    <property type="molecule type" value="Genomic_DNA"/>
</dbReference>
<dbReference type="RefSeq" id="NP_842678.1">
    <property type="nucleotide sequence ID" value="NC_003997.3"/>
</dbReference>
<dbReference type="RefSeq" id="WP_000160207.1">
    <property type="nucleotide sequence ID" value="NZ_WXXJ01000051.1"/>
</dbReference>
<dbReference type="RefSeq" id="YP_026396.1">
    <property type="nucleotide sequence ID" value="NC_005945.1"/>
</dbReference>
<dbReference type="SMR" id="Q81VT0"/>
<dbReference type="STRING" id="261594.GBAA_0110"/>
<dbReference type="DNASU" id="1087637"/>
<dbReference type="GeneID" id="93010943"/>
<dbReference type="KEGG" id="ban:BA_0110"/>
<dbReference type="KEGG" id="bar:GBAA_0110"/>
<dbReference type="KEGG" id="bat:BAS0110"/>
<dbReference type="PATRIC" id="fig|198094.11.peg.107"/>
<dbReference type="eggNOG" id="COG0087">
    <property type="taxonomic scope" value="Bacteria"/>
</dbReference>
<dbReference type="HOGENOM" id="CLU_044142_4_1_9"/>
<dbReference type="OMA" id="GKNIPCT"/>
<dbReference type="OrthoDB" id="9806135at2"/>
<dbReference type="Proteomes" id="UP000000427">
    <property type="component" value="Chromosome"/>
</dbReference>
<dbReference type="Proteomes" id="UP000000594">
    <property type="component" value="Chromosome"/>
</dbReference>
<dbReference type="GO" id="GO:0022625">
    <property type="term" value="C:cytosolic large ribosomal subunit"/>
    <property type="evidence" value="ECO:0007669"/>
    <property type="project" value="TreeGrafter"/>
</dbReference>
<dbReference type="GO" id="GO:0019843">
    <property type="term" value="F:rRNA binding"/>
    <property type="evidence" value="ECO:0007669"/>
    <property type="project" value="UniProtKB-UniRule"/>
</dbReference>
<dbReference type="GO" id="GO:0003735">
    <property type="term" value="F:structural constituent of ribosome"/>
    <property type="evidence" value="ECO:0007669"/>
    <property type="project" value="InterPro"/>
</dbReference>
<dbReference type="GO" id="GO:0006412">
    <property type="term" value="P:translation"/>
    <property type="evidence" value="ECO:0007669"/>
    <property type="project" value="UniProtKB-UniRule"/>
</dbReference>
<dbReference type="FunFam" id="2.40.30.10:FF:000004">
    <property type="entry name" value="50S ribosomal protein L3"/>
    <property type="match status" value="1"/>
</dbReference>
<dbReference type="FunFam" id="3.30.160.810:FF:000002">
    <property type="entry name" value="50S ribosomal protein L3"/>
    <property type="match status" value="1"/>
</dbReference>
<dbReference type="Gene3D" id="3.30.160.810">
    <property type="match status" value="1"/>
</dbReference>
<dbReference type="Gene3D" id="2.40.30.10">
    <property type="entry name" value="Translation factors"/>
    <property type="match status" value="1"/>
</dbReference>
<dbReference type="HAMAP" id="MF_01325_B">
    <property type="entry name" value="Ribosomal_uL3_B"/>
    <property type="match status" value="1"/>
</dbReference>
<dbReference type="InterPro" id="IPR000597">
    <property type="entry name" value="Ribosomal_uL3"/>
</dbReference>
<dbReference type="InterPro" id="IPR019927">
    <property type="entry name" value="Ribosomal_uL3_bac/org-type"/>
</dbReference>
<dbReference type="InterPro" id="IPR019926">
    <property type="entry name" value="Ribosomal_uL3_CS"/>
</dbReference>
<dbReference type="InterPro" id="IPR009000">
    <property type="entry name" value="Transl_B-barrel_sf"/>
</dbReference>
<dbReference type="NCBIfam" id="TIGR03625">
    <property type="entry name" value="L3_bact"/>
    <property type="match status" value="1"/>
</dbReference>
<dbReference type="PANTHER" id="PTHR11229">
    <property type="entry name" value="50S RIBOSOMAL PROTEIN L3"/>
    <property type="match status" value="1"/>
</dbReference>
<dbReference type="PANTHER" id="PTHR11229:SF16">
    <property type="entry name" value="LARGE RIBOSOMAL SUBUNIT PROTEIN UL3C"/>
    <property type="match status" value="1"/>
</dbReference>
<dbReference type="Pfam" id="PF00297">
    <property type="entry name" value="Ribosomal_L3"/>
    <property type="match status" value="1"/>
</dbReference>
<dbReference type="SUPFAM" id="SSF50447">
    <property type="entry name" value="Translation proteins"/>
    <property type="match status" value="1"/>
</dbReference>
<dbReference type="PROSITE" id="PS00474">
    <property type="entry name" value="RIBOSOMAL_L3"/>
    <property type="match status" value="1"/>
</dbReference>
<feature type="chain" id="PRO_0000077062" description="Large ribosomal subunit protein uL3">
    <location>
        <begin position="1"/>
        <end position="210"/>
    </location>
</feature>
<feature type="region of interest" description="Disordered" evidence="2">
    <location>
        <begin position="125"/>
        <end position="151"/>
    </location>
</feature>
<comment type="function">
    <text evidence="1">One of the primary rRNA binding proteins, it binds directly near the 3'-end of the 23S rRNA, where it nucleates assembly of the 50S subunit.</text>
</comment>
<comment type="subunit">
    <text evidence="1">Part of the 50S ribosomal subunit. Forms a cluster with proteins L14 and L19.</text>
</comment>
<comment type="similarity">
    <text evidence="1">Belongs to the universal ribosomal protein uL3 family.</text>
</comment>
<proteinExistence type="inferred from homology"/>
<keyword id="KW-1185">Reference proteome</keyword>
<keyword id="KW-0687">Ribonucleoprotein</keyword>
<keyword id="KW-0689">Ribosomal protein</keyword>
<keyword id="KW-0694">RNA-binding</keyword>
<keyword id="KW-0699">rRNA-binding</keyword>
<protein>
    <recommendedName>
        <fullName evidence="1">Large ribosomal subunit protein uL3</fullName>
    </recommendedName>
    <alternativeName>
        <fullName evidence="3">50S ribosomal protein L3</fullName>
    </alternativeName>
</protein>
<organism>
    <name type="scientific">Bacillus anthracis</name>
    <dbReference type="NCBI Taxonomy" id="1392"/>
    <lineage>
        <taxon>Bacteria</taxon>
        <taxon>Bacillati</taxon>
        <taxon>Bacillota</taxon>
        <taxon>Bacilli</taxon>
        <taxon>Bacillales</taxon>
        <taxon>Bacillaceae</taxon>
        <taxon>Bacillus</taxon>
        <taxon>Bacillus cereus group</taxon>
    </lineage>
</organism>
<evidence type="ECO:0000255" key="1">
    <source>
        <dbReference type="HAMAP-Rule" id="MF_01325"/>
    </source>
</evidence>
<evidence type="ECO:0000256" key="2">
    <source>
        <dbReference type="SAM" id="MobiDB-lite"/>
    </source>
</evidence>
<evidence type="ECO:0000305" key="3"/>
<accession>Q81VT0</accession>
<accession>Q6I4T4</accession>
<accession>Q6KYI0</accession>
<sequence length="210" mass="22692">MTKGILGRKIGMTQVFAENGELIPVTVIAANPNVVLQKKTTETDGYNAIQLGFEDKREKLTNKPEQGHTAKASTTPKRFIREIRDADVDGLEVGQEVKVDVFATGEIVDVTGISKGKGFQGVIKRHGQSRGPMSHGSRYHRRPGSMGPVAPNRVFKGKKLAGRMGGDQVTIQNLEIVQVDTERNLLLVKGNVPGAKKSLVVVQGAVKVSK</sequence>